<comment type="function">
    <text evidence="1">Component of the cytochrome c oxidase, the last enzyme in the mitochondrial electron transport chain which drives oxidative phosphorylation. The respiratory chain contains 3 multisubunit complexes succinate dehydrogenase (complex II, CII), ubiquinol-cytochrome c oxidoreductase (cytochrome b-c1 complex, complex III, CIII) and cytochrome c oxidase (complex IV, CIV), that cooperate to transfer electrons derived from NADH and succinate to molecular oxygen, creating an electrochemical gradient over the inner membrane that drives transmembrane transport and the ATP synthase. Cytochrome c oxidase is the component of the respiratory chain that catalyzes the reduction of oxygen to water. Electrons originating from reduced cytochrome c in the intermembrane space (IMS) are transferred via the dinuclear copper A center (CU(A)) of subunit 2 and heme A of subunit 1 to the active site in subunit 1, a binuclear center (BNC) formed by heme A3 and copper B (CU(B)). The BNC reduces molecular oxygen to 2 water molecules using 4 electrons from cytochrome c in the IMS and 4 protons from the mitochondrial matrix.</text>
</comment>
<comment type="catalytic activity">
    <reaction evidence="1">
        <text>4 Fe(II)-[cytochrome c] + O2 + 8 H(+)(in) = 4 Fe(III)-[cytochrome c] + 2 H2O + 4 H(+)(out)</text>
        <dbReference type="Rhea" id="RHEA:11436"/>
        <dbReference type="Rhea" id="RHEA-COMP:10350"/>
        <dbReference type="Rhea" id="RHEA-COMP:14399"/>
        <dbReference type="ChEBI" id="CHEBI:15377"/>
        <dbReference type="ChEBI" id="CHEBI:15378"/>
        <dbReference type="ChEBI" id="CHEBI:15379"/>
        <dbReference type="ChEBI" id="CHEBI:29033"/>
        <dbReference type="ChEBI" id="CHEBI:29034"/>
        <dbReference type="EC" id="7.1.1.9"/>
    </reaction>
    <physiologicalReaction direction="left-to-right" evidence="1">
        <dbReference type="Rhea" id="RHEA:11437"/>
    </physiologicalReaction>
</comment>
<comment type="subunit">
    <text evidence="1">Component of the cytochrome c oxidase (complex IV, CIV), a multisubunit enzyme composed of a catalytic core of 3 subunits and several supernumerary subunits. The complex exists as a monomer or a dimer and forms supercomplexes (SCs) in the inner mitochondrial membrane with ubiquinol-cytochrome c oxidoreductase (cytochrome b-c1 complex, complex III, CIII).</text>
</comment>
<comment type="subcellular location">
    <subcellularLocation>
        <location evidence="1">Mitochondrion inner membrane</location>
        <topology evidence="1">Multi-pass membrane protein</topology>
    </subcellularLocation>
</comment>
<comment type="similarity">
    <text evidence="3">Belongs to the cytochrome c oxidase subunit 3 family.</text>
</comment>
<reference key="1">
    <citation type="journal article" date="1988" name="J. Mol. Biol.">
        <title>Nucleotide sequence and gene organization of sea urchin mitochondrial DNA.</title>
        <authorList>
            <person name="Jacobs H.T."/>
            <person name="Elliott D.J."/>
            <person name="Math V.B."/>
            <person name="Farquharson A."/>
        </authorList>
    </citation>
    <scope>NUCLEOTIDE SEQUENCE [GENOMIC DNA]</scope>
</reference>
<accession>P15546</accession>
<proteinExistence type="inferred from homology"/>
<sequence length="260" mass="29489">MAIQHPYHLVDQSPWPLDGAFSGLMMTSGNVLWFHTQKTNLTLVGFLLLITNMVNWWRDIIRKANFQGSHTAIVNKGMRYGMILFITSEVCFFFAFFWAFFHSSLAPSVEIGVAWPPSGITPLNPFLVPLLNTGVLLSSGVTLSWSHHSILAGNRTESIQALFLTVALGSYFTALQAWEYIDAPFTIADSVYGSTFFVATGFHGLQVIIGTTFLMVCLFRTAGRHFSTHHHFGFEAAAWYWHFVDVVWFVLYWLIYWWGA</sequence>
<geneLocation type="mitochondrion"/>
<protein>
    <recommendedName>
        <fullName>Cytochrome c oxidase subunit 3</fullName>
        <ecNumber>7.1.1.9</ecNumber>
    </recommendedName>
    <alternativeName>
        <fullName>Cytochrome c oxidase polypeptide III</fullName>
    </alternativeName>
</protein>
<dbReference type="EC" id="7.1.1.9"/>
<dbReference type="EMBL" id="X12631">
    <property type="status" value="NOT_ANNOTATED_CDS"/>
    <property type="molecule type" value="Genomic_DNA"/>
</dbReference>
<dbReference type="PIR" id="S01506">
    <property type="entry name" value="S01506"/>
</dbReference>
<dbReference type="SMR" id="P15546"/>
<dbReference type="FunCoup" id="P15546">
    <property type="interactions" value="13"/>
</dbReference>
<dbReference type="STRING" id="7668.P15546"/>
<dbReference type="InParanoid" id="P15546"/>
<dbReference type="Proteomes" id="UP000007110">
    <property type="component" value="Unassembled WGS sequence"/>
</dbReference>
<dbReference type="GO" id="GO:0005743">
    <property type="term" value="C:mitochondrial inner membrane"/>
    <property type="evidence" value="ECO:0007669"/>
    <property type="project" value="UniProtKB-SubCell"/>
</dbReference>
<dbReference type="GO" id="GO:0005739">
    <property type="term" value="C:mitochondrion"/>
    <property type="evidence" value="ECO:0000318"/>
    <property type="project" value="GO_Central"/>
</dbReference>
<dbReference type="GO" id="GO:0004129">
    <property type="term" value="F:cytochrome-c oxidase activity"/>
    <property type="evidence" value="ECO:0007669"/>
    <property type="project" value="UniProtKB-EC"/>
</dbReference>
<dbReference type="GO" id="GO:0006123">
    <property type="term" value="P:mitochondrial electron transport, cytochrome c to oxygen"/>
    <property type="evidence" value="ECO:0000318"/>
    <property type="project" value="GO_Central"/>
</dbReference>
<dbReference type="CDD" id="cd01665">
    <property type="entry name" value="Cyt_c_Oxidase_III"/>
    <property type="match status" value="1"/>
</dbReference>
<dbReference type="FunFam" id="1.10.287.70:FF:000082">
    <property type="entry name" value="Cytochrome c oxidase subunit 3"/>
    <property type="match status" value="1"/>
</dbReference>
<dbReference type="FunFam" id="1.20.120.80:FF:000002">
    <property type="entry name" value="Cytochrome c oxidase subunit 3"/>
    <property type="match status" value="1"/>
</dbReference>
<dbReference type="Gene3D" id="1.10.287.70">
    <property type="match status" value="1"/>
</dbReference>
<dbReference type="Gene3D" id="1.20.120.80">
    <property type="entry name" value="Cytochrome c oxidase, subunit III, four-helix bundle"/>
    <property type="match status" value="1"/>
</dbReference>
<dbReference type="InterPro" id="IPR024791">
    <property type="entry name" value="Cyt_c/ubiquinol_Oxase_su3"/>
</dbReference>
<dbReference type="InterPro" id="IPR033945">
    <property type="entry name" value="Cyt_c_oxase_su3_dom"/>
</dbReference>
<dbReference type="InterPro" id="IPR000298">
    <property type="entry name" value="Cyt_c_oxidase-like_su3"/>
</dbReference>
<dbReference type="InterPro" id="IPR035973">
    <property type="entry name" value="Cyt_c_oxidase_su3-like_sf"/>
</dbReference>
<dbReference type="InterPro" id="IPR013833">
    <property type="entry name" value="Cyt_c_oxidase_su3_a-hlx"/>
</dbReference>
<dbReference type="PANTHER" id="PTHR11403:SF7">
    <property type="entry name" value="CYTOCHROME C OXIDASE SUBUNIT 3"/>
    <property type="match status" value="1"/>
</dbReference>
<dbReference type="PANTHER" id="PTHR11403">
    <property type="entry name" value="CYTOCHROME C OXIDASE SUBUNIT III"/>
    <property type="match status" value="1"/>
</dbReference>
<dbReference type="Pfam" id="PF00510">
    <property type="entry name" value="COX3"/>
    <property type="match status" value="1"/>
</dbReference>
<dbReference type="SUPFAM" id="SSF81452">
    <property type="entry name" value="Cytochrome c oxidase subunit III-like"/>
    <property type="match status" value="1"/>
</dbReference>
<dbReference type="PROSITE" id="PS50253">
    <property type="entry name" value="COX3"/>
    <property type="match status" value="1"/>
</dbReference>
<organism>
    <name type="scientific">Strongylocentrotus purpuratus</name>
    <name type="common">Purple sea urchin</name>
    <dbReference type="NCBI Taxonomy" id="7668"/>
    <lineage>
        <taxon>Eukaryota</taxon>
        <taxon>Metazoa</taxon>
        <taxon>Echinodermata</taxon>
        <taxon>Eleutherozoa</taxon>
        <taxon>Echinozoa</taxon>
        <taxon>Echinoidea</taxon>
        <taxon>Euechinoidea</taxon>
        <taxon>Echinacea</taxon>
        <taxon>Camarodonta</taxon>
        <taxon>Echinidea</taxon>
        <taxon>Strongylocentrotidae</taxon>
        <taxon>Strongylocentrotus</taxon>
    </lineage>
</organism>
<gene>
    <name type="primary">COIII</name>
</gene>
<feature type="chain" id="PRO_0000183858" description="Cytochrome c oxidase subunit 3">
    <location>
        <begin position="1"/>
        <end position="260"/>
    </location>
</feature>
<feature type="transmembrane region" description="Helical" evidence="2">
    <location>
        <begin position="41"/>
        <end position="61"/>
    </location>
</feature>
<feature type="transmembrane region" description="Helical" evidence="2">
    <location>
        <begin position="81"/>
        <end position="101"/>
    </location>
</feature>
<feature type="transmembrane region" description="Helical" evidence="2">
    <location>
        <begin position="133"/>
        <end position="153"/>
    </location>
</feature>
<feature type="transmembrane region" description="Helical" evidence="2">
    <location>
        <begin position="161"/>
        <end position="181"/>
    </location>
</feature>
<feature type="transmembrane region" description="Helical" evidence="2">
    <location>
        <begin position="196"/>
        <end position="216"/>
    </location>
</feature>
<feature type="transmembrane region" description="Helical" evidence="2">
    <location>
        <begin position="238"/>
        <end position="258"/>
    </location>
</feature>
<evidence type="ECO:0000250" key="1">
    <source>
        <dbReference type="UniProtKB" id="P00420"/>
    </source>
</evidence>
<evidence type="ECO:0000255" key="2"/>
<evidence type="ECO:0000305" key="3"/>
<name>COX3_STRPU</name>
<keyword id="KW-0472">Membrane</keyword>
<keyword id="KW-0496">Mitochondrion</keyword>
<keyword id="KW-0999">Mitochondrion inner membrane</keyword>
<keyword id="KW-1185">Reference proteome</keyword>
<keyword id="KW-1278">Translocase</keyword>
<keyword id="KW-0812">Transmembrane</keyword>
<keyword id="KW-1133">Transmembrane helix</keyword>